<keyword id="KW-0961">Cell wall biogenesis/degradation</keyword>
<keyword id="KW-0963">Cytoplasm</keyword>
<keyword id="KW-0596">Phosphopantetheine</keyword>
<keyword id="KW-0597">Phosphoprotein</keyword>
<keyword id="KW-1185">Reference proteome</keyword>
<reference key="1">
    <citation type="journal article" date="2006" name="Proc. Natl. Acad. Sci. U.S.A.">
        <title>The complete genome sequence of Lactobacillus bulgaricus reveals extensive and ongoing reductive evolution.</title>
        <authorList>
            <person name="van de Guchte M."/>
            <person name="Penaud S."/>
            <person name="Grimaldi C."/>
            <person name="Barbe V."/>
            <person name="Bryson K."/>
            <person name="Nicolas P."/>
            <person name="Robert C."/>
            <person name="Oztas S."/>
            <person name="Mangenot S."/>
            <person name="Couloux A."/>
            <person name="Loux V."/>
            <person name="Dervyn R."/>
            <person name="Bossy R."/>
            <person name="Bolotin A."/>
            <person name="Batto J.-M."/>
            <person name="Walunas T."/>
            <person name="Gibrat J.-F."/>
            <person name="Bessieres P."/>
            <person name="Weissenbach J."/>
            <person name="Ehrlich S.D."/>
            <person name="Maguin E."/>
        </authorList>
    </citation>
    <scope>NUCLEOTIDE SEQUENCE [LARGE SCALE GENOMIC DNA]</scope>
    <source>
        <strain>ATCC 11842 / DSM 20081 / BCRC 10696 / JCM 1002 / NBRC 13953 / NCIMB 11778 / NCTC 12712 / WDCM 00102 / Lb 14</strain>
    </source>
</reference>
<organism>
    <name type="scientific">Lactobacillus delbrueckii subsp. bulgaricus (strain ATCC 11842 / DSM 20081 / BCRC 10696 / JCM 1002 / NBRC 13953 / NCIMB 11778 / NCTC 12712 / WDCM 00102 / Lb 14)</name>
    <dbReference type="NCBI Taxonomy" id="390333"/>
    <lineage>
        <taxon>Bacteria</taxon>
        <taxon>Bacillati</taxon>
        <taxon>Bacillota</taxon>
        <taxon>Bacilli</taxon>
        <taxon>Lactobacillales</taxon>
        <taxon>Lactobacillaceae</taxon>
        <taxon>Lactobacillus</taxon>
    </lineage>
</organism>
<gene>
    <name evidence="1" type="primary">dltC</name>
    <name type="ordered locus">Ldb2146</name>
</gene>
<sequence length="80" mass="9259">MDIQKQIVDILAEATGEDFSDNMDQELYESGIMDSMTTVQMLLTLQETFDITVPVSEFNRDDWNTPNKLVEQVKKLQDEE</sequence>
<proteinExistence type="inferred from homology"/>
<comment type="function">
    <text evidence="1">Carrier protein involved in the D-alanylation of lipoteichoic acid (LTA). The loading of thioester-linked D-alanine onto DltC is catalyzed by D-alanine--D-alanyl carrier protein ligase DltA. The DltC-carried D-alanyl group is further transferred to cell membrane phosphatidylglycerol (PG) by forming an ester bond, probably catalyzed by DltD. D-alanylation of LTA plays an important role in modulating the properties of the cell wall in Gram-positive bacteria, influencing the net charge of the cell wall.</text>
</comment>
<comment type="pathway">
    <text evidence="1">Cell wall biogenesis; lipoteichoic acid biosynthesis.</text>
</comment>
<comment type="subcellular location">
    <subcellularLocation>
        <location evidence="1">Cytoplasm</location>
    </subcellularLocation>
</comment>
<comment type="PTM">
    <text evidence="1">4'-phosphopantetheine is transferred from CoA to a specific serine of apo-DCP.</text>
</comment>
<comment type="similarity">
    <text evidence="1">Belongs to the DltC family.</text>
</comment>
<protein>
    <recommendedName>
        <fullName evidence="1">D-alanyl carrier protein</fullName>
        <shortName evidence="1">DCP</shortName>
    </recommendedName>
    <alternativeName>
        <fullName evidence="1">D-alanine--poly(phosphoribitol) ligase subunit 2</fullName>
    </alternativeName>
</protein>
<evidence type="ECO:0000255" key="1">
    <source>
        <dbReference type="HAMAP-Rule" id="MF_00565"/>
    </source>
</evidence>
<name>DLTC_LACDA</name>
<feature type="chain" id="PRO_1000024915" description="D-alanyl carrier protein">
    <location>
        <begin position="1"/>
        <end position="80"/>
    </location>
</feature>
<feature type="domain" description="Carrier" evidence="1">
    <location>
        <begin position="1"/>
        <end position="77"/>
    </location>
</feature>
<feature type="modified residue" description="O-(pantetheine 4'-phosphoryl)serine" evidence="1">
    <location>
        <position position="35"/>
    </location>
</feature>
<dbReference type="EMBL" id="CR954253">
    <property type="protein sequence ID" value="CAI98870.1"/>
    <property type="molecule type" value="Genomic_DNA"/>
</dbReference>
<dbReference type="RefSeq" id="WP_003620019.1">
    <property type="nucleotide sequence ID" value="NZ_JQAV01000031.1"/>
</dbReference>
<dbReference type="SMR" id="Q1G852"/>
<dbReference type="STRING" id="390333.Ldb2146"/>
<dbReference type="KEGG" id="ldb:Ldb2146"/>
<dbReference type="PATRIC" id="fig|390333.13.peg.1345"/>
<dbReference type="eggNOG" id="COG0236">
    <property type="taxonomic scope" value="Bacteria"/>
</dbReference>
<dbReference type="HOGENOM" id="CLU_108696_19_0_9"/>
<dbReference type="BioCyc" id="LDEL390333:LDB_RS09360-MONOMER"/>
<dbReference type="UniPathway" id="UPA00556"/>
<dbReference type="Proteomes" id="UP000001259">
    <property type="component" value="Chromosome"/>
</dbReference>
<dbReference type="GO" id="GO:0005737">
    <property type="term" value="C:cytoplasm"/>
    <property type="evidence" value="ECO:0007669"/>
    <property type="project" value="UniProtKB-SubCell"/>
</dbReference>
<dbReference type="GO" id="GO:0036370">
    <property type="term" value="F:D-alanyl carrier activity"/>
    <property type="evidence" value="ECO:0007669"/>
    <property type="project" value="UniProtKB-UniRule"/>
</dbReference>
<dbReference type="GO" id="GO:0071555">
    <property type="term" value="P:cell wall organization"/>
    <property type="evidence" value="ECO:0007669"/>
    <property type="project" value="UniProtKB-KW"/>
</dbReference>
<dbReference type="GO" id="GO:0070395">
    <property type="term" value="P:lipoteichoic acid biosynthetic process"/>
    <property type="evidence" value="ECO:0007669"/>
    <property type="project" value="UniProtKB-UniRule"/>
</dbReference>
<dbReference type="Gene3D" id="1.10.1200.10">
    <property type="entry name" value="ACP-like"/>
    <property type="match status" value="1"/>
</dbReference>
<dbReference type="HAMAP" id="MF_00565">
    <property type="entry name" value="DltC"/>
    <property type="match status" value="1"/>
</dbReference>
<dbReference type="InterPro" id="IPR036736">
    <property type="entry name" value="ACP-like_sf"/>
</dbReference>
<dbReference type="InterPro" id="IPR003230">
    <property type="entry name" value="DltC"/>
</dbReference>
<dbReference type="InterPro" id="IPR009081">
    <property type="entry name" value="PP-bd_ACP"/>
</dbReference>
<dbReference type="NCBIfam" id="TIGR01688">
    <property type="entry name" value="dltC"/>
    <property type="match status" value="1"/>
</dbReference>
<dbReference type="NCBIfam" id="NF003464">
    <property type="entry name" value="PRK05087.1"/>
    <property type="match status" value="1"/>
</dbReference>
<dbReference type="Pfam" id="PF00550">
    <property type="entry name" value="PP-binding"/>
    <property type="match status" value="1"/>
</dbReference>
<dbReference type="SUPFAM" id="SSF47336">
    <property type="entry name" value="ACP-like"/>
    <property type="match status" value="1"/>
</dbReference>
<dbReference type="PROSITE" id="PS50075">
    <property type="entry name" value="CARRIER"/>
    <property type="match status" value="1"/>
</dbReference>
<accession>Q1G852</accession>